<evidence type="ECO:0000255" key="1">
    <source>
        <dbReference type="HAMAP-Rule" id="MF_00446"/>
    </source>
</evidence>
<dbReference type="EC" id="4.1.1.11" evidence="1"/>
<dbReference type="EMBL" id="AM398681">
    <property type="protein sequence ID" value="CAL42225.1"/>
    <property type="molecule type" value="Genomic_DNA"/>
</dbReference>
<dbReference type="RefSeq" id="WP_011962286.1">
    <property type="nucleotide sequence ID" value="NC_009613.3"/>
</dbReference>
<dbReference type="RefSeq" id="YP_001295045.1">
    <property type="nucleotide sequence ID" value="NC_009613.3"/>
</dbReference>
<dbReference type="SMR" id="A6GVV2"/>
<dbReference type="STRING" id="402612.FP0107"/>
<dbReference type="EnsemblBacteria" id="CAL42225">
    <property type="protein sequence ID" value="CAL42225"/>
    <property type="gene ID" value="FP0107"/>
</dbReference>
<dbReference type="GeneID" id="66553735"/>
<dbReference type="KEGG" id="fps:FP0107"/>
<dbReference type="PATRIC" id="fig|402612.5.peg.110"/>
<dbReference type="eggNOG" id="COG0853">
    <property type="taxonomic scope" value="Bacteria"/>
</dbReference>
<dbReference type="HOGENOM" id="CLU_115305_2_0_10"/>
<dbReference type="OrthoDB" id="9803983at2"/>
<dbReference type="UniPathway" id="UPA00028">
    <property type="reaction ID" value="UER00002"/>
</dbReference>
<dbReference type="Proteomes" id="UP000006394">
    <property type="component" value="Chromosome"/>
</dbReference>
<dbReference type="GO" id="GO:0005829">
    <property type="term" value="C:cytosol"/>
    <property type="evidence" value="ECO:0007669"/>
    <property type="project" value="TreeGrafter"/>
</dbReference>
<dbReference type="GO" id="GO:0004068">
    <property type="term" value="F:aspartate 1-decarboxylase activity"/>
    <property type="evidence" value="ECO:0007669"/>
    <property type="project" value="UniProtKB-UniRule"/>
</dbReference>
<dbReference type="GO" id="GO:0006523">
    <property type="term" value="P:alanine biosynthetic process"/>
    <property type="evidence" value="ECO:0007669"/>
    <property type="project" value="InterPro"/>
</dbReference>
<dbReference type="GO" id="GO:0015940">
    <property type="term" value="P:pantothenate biosynthetic process"/>
    <property type="evidence" value="ECO:0007669"/>
    <property type="project" value="UniProtKB-UniRule"/>
</dbReference>
<dbReference type="CDD" id="cd06919">
    <property type="entry name" value="Asp_decarbox"/>
    <property type="match status" value="1"/>
</dbReference>
<dbReference type="Gene3D" id="2.40.40.20">
    <property type="match status" value="1"/>
</dbReference>
<dbReference type="HAMAP" id="MF_00446">
    <property type="entry name" value="PanD"/>
    <property type="match status" value="1"/>
</dbReference>
<dbReference type="InterPro" id="IPR009010">
    <property type="entry name" value="Asp_de-COase-like_dom_sf"/>
</dbReference>
<dbReference type="InterPro" id="IPR003190">
    <property type="entry name" value="Asp_decarbox"/>
</dbReference>
<dbReference type="NCBIfam" id="TIGR00223">
    <property type="entry name" value="panD"/>
    <property type="match status" value="1"/>
</dbReference>
<dbReference type="PANTHER" id="PTHR21012">
    <property type="entry name" value="ASPARTATE 1-DECARBOXYLASE"/>
    <property type="match status" value="1"/>
</dbReference>
<dbReference type="PANTHER" id="PTHR21012:SF0">
    <property type="entry name" value="ASPARTATE 1-DECARBOXYLASE"/>
    <property type="match status" value="1"/>
</dbReference>
<dbReference type="Pfam" id="PF02261">
    <property type="entry name" value="Asp_decarbox"/>
    <property type="match status" value="1"/>
</dbReference>
<dbReference type="PIRSF" id="PIRSF006246">
    <property type="entry name" value="Asp_decarbox"/>
    <property type="match status" value="1"/>
</dbReference>
<dbReference type="SUPFAM" id="SSF50692">
    <property type="entry name" value="ADC-like"/>
    <property type="match status" value="1"/>
</dbReference>
<feature type="chain" id="PRO_0000306973" description="Aspartate 1-decarboxylase beta chain" evidence="1">
    <location>
        <begin position="1"/>
        <end position="24"/>
    </location>
</feature>
<feature type="chain" id="PRO_0000306974" description="Aspartate 1-decarboxylase alpha chain" evidence="1">
    <location>
        <begin position="25"/>
        <end position="116"/>
    </location>
</feature>
<feature type="active site" description="Schiff-base intermediate with substrate; via pyruvic acid" evidence="1">
    <location>
        <position position="25"/>
    </location>
</feature>
<feature type="active site" description="Proton donor" evidence="1">
    <location>
        <position position="58"/>
    </location>
</feature>
<feature type="binding site" evidence="1">
    <location>
        <position position="57"/>
    </location>
    <ligand>
        <name>substrate</name>
    </ligand>
</feature>
<feature type="binding site" evidence="1">
    <location>
        <begin position="73"/>
        <end position="75"/>
    </location>
    <ligand>
        <name>substrate</name>
    </ligand>
</feature>
<feature type="modified residue" description="Pyruvic acid (Ser)" evidence="1">
    <location>
        <position position="25"/>
    </location>
</feature>
<gene>
    <name evidence="1" type="primary">panD</name>
    <name type="ordered locus">FP0107</name>
</gene>
<proteinExistence type="inferred from homology"/>
<protein>
    <recommendedName>
        <fullName evidence="1">Aspartate 1-decarboxylase</fullName>
        <ecNumber evidence="1">4.1.1.11</ecNumber>
    </recommendedName>
    <alternativeName>
        <fullName evidence="1">Aspartate alpha-decarboxylase</fullName>
    </alternativeName>
    <component>
        <recommendedName>
            <fullName evidence="1">Aspartate 1-decarboxylase beta chain</fullName>
        </recommendedName>
    </component>
    <component>
        <recommendedName>
            <fullName evidence="1">Aspartate 1-decarboxylase alpha chain</fullName>
        </recommendedName>
    </component>
</protein>
<sequence length="116" mass="12963">MQIEVVKSKIHRVTVTGADLNYIGSITIDEVLLEASNIIEGEKVNIVNINNGERFETYAIKGAKNSGEITLNGPAARKVHKGDIIIIMSYARMDFEKAKTFKPWLVFPNEKDNSLK</sequence>
<keyword id="KW-0068">Autocatalytic cleavage</keyword>
<keyword id="KW-0963">Cytoplasm</keyword>
<keyword id="KW-0210">Decarboxylase</keyword>
<keyword id="KW-0456">Lyase</keyword>
<keyword id="KW-0566">Pantothenate biosynthesis</keyword>
<keyword id="KW-0670">Pyruvate</keyword>
<keyword id="KW-1185">Reference proteome</keyword>
<keyword id="KW-0704">Schiff base</keyword>
<keyword id="KW-0865">Zymogen</keyword>
<accession>A6GVV2</accession>
<organism>
    <name type="scientific">Flavobacterium psychrophilum (strain ATCC 49511 / DSM 21280 / CIP 103535 / JIP02/86)</name>
    <dbReference type="NCBI Taxonomy" id="402612"/>
    <lineage>
        <taxon>Bacteria</taxon>
        <taxon>Pseudomonadati</taxon>
        <taxon>Bacteroidota</taxon>
        <taxon>Flavobacteriia</taxon>
        <taxon>Flavobacteriales</taxon>
        <taxon>Flavobacteriaceae</taxon>
        <taxon>Flavobacterium</taxon>
    </lineage>
</organism>
<reference key="1">
    <citation type="journal article" date="2007" name="Nat. Biotechnol.">
        <title>Complete genome sequence of the fish pathogen Flavobacterium psychrophilum.</title>
        <authorList>
            <person name="Duchaud E."/>
            <person name="Boussaha M."/>
            <person name="Loux V."/>
            <person name="Bernardet J.-F."/>
            <person name="Michel C."/>
            <person name="Kerouault B."/>
            <person name="Mondot S."/>
            <person name="Nicolas P."/>
            <person name="Bossy R."/>
            <person name="Caron C."/>
            <person name="Bessieres P."/>
            <person name="Gibrat J.-F."/>
            <person name="Claverol S."/>
            <person name="Dumetz F."/>
            <person name="Le Henaff M."/>
            <person name="Benmansour A."/>
        </authorList>
    </citation>
    <scope>NUCLEOTIDE SEQUENCE [LARGE SCALE GENOMIC DNA]</scope>
    <source>
        <strain>ATCC 49511 / DSM 21280 / CIP 103535 / JIP02/86</strain>
    </source>
</reference>
<name>PAND_FLAPJ</name>
<comment type="function">
    <text evidence="1">Catalyzes the pyruvoyl-dependent decarboxylation of aspartate to produce beta-alanine.</text>
</comment>
<comment type="catalytic activity">
    <reaction evidence="1">
        <text>L-aspartate + H(+) = beta-alanine + CO2</text>
        <dbReference type="Rhea" id="RHEA:19497"/>
        <dbReference type="ChEBI" id="CHEBI:15378"/>
        <dbReference type="ChEBI" id="CHEBI:16526"/>
        <dbReference type="ChEBI" id="CHEBI:29991"/>
        <dbReference type="ChEBI" id="CHEBI:57966"/>
        <dbReference type="EC" id="4.1.1.11"/>
    </reaction>
</comment>
<comment type="cofactor">
    <cofactor evidence="1">
        <name>pyruvate</name>
        <dbReference type="ChEBI" id="CHEBI:15361"/>
    </cofactor>
    <text evidence="1">Binds 1 pyruvoyl group covalently per subunit.</text>
</comment>
<comment type="pathway">
    <text evidence="1">Cofactor biosynthesis; (R)-pantothenate biosynthesis; beta-alanine from L-aspartate: step 1/1.</text>
</comment>
<comment type="subunit">
    <text evidence="1">Heterooctamer of four alpha and four beta subunits.</text>
</comment>
<comment type="subcellular location">
    <subcellularLocation>
        <location evidence="1">Cytoplasm</location>
    </subcellularLocation>
</comment>
<comment type="PTM">
    <text evidence="1">Is synthesized initially as an inactive proenzyme, which is activated by self-cleavage at a specific serine bond to produce a beta-subunit with a hydroxyl group at its C-terminus and an alpha-subunit with a pyruvoyl group at its N-terminus.</text>
</comment>
<comment type="similarity">
    <text evidence="1">Belongs to the PanD family.</text>
</comment>